<proteinExistence type="inferred from homology"/>
<sequence length="562" mass="62397">MKDYLRTQIRRVLDALGDVPDDFEIELEAPDRPEHGDLATNTALRLASVLGDNPRSIAETLAERLRERVDPARIKSVEVAGPGFVNFRFAQDYLFDGLADLLAQGDTFGQTDAGAGERALVEYVSANPTGPLNVGHGRNAVLGDTIANLLAWTGYDVTREYYYNDAGRQMRVLAQSVRARYEALAGNVPTTTLTLDDDTTVEVPETFPEDGYLGQYIVEIAQALYDEHGDALCATDDLAPFRAAAETAIFGDIEATLRALNIDMDGYANEQALHDEGRVDAVLDGLADAGYTYEEDGALWFKTTEFGTEDDTVLVKQTGEPTYRTPDIAYHTAKFERGFDLMVDVFGADHHAAYPDVLSALDVLGYDTDRVDVILYQFVTLVRGDEPVKMSTRRANYVTLDDLIEQVGADVTRFFFLMRSPDTHLNFDLELAEEESEKNPVFYLQYAHARICSVLDKAEEVGFSHDEDADLALLTHEDEIALIKELLRFPRELQNAADARAPHFVPNYLRDVATAFSQFYDNCRIIGEEQELASARMRLALAAKTVLKNGLTVLGISAPRQM</sequence>
<keyword id="KW-0030">Aminoacyl-tRNA synthetase</keyword>
<keyword id="KW-0067">ATP-binding</keyword>
<keyword id="KW-0963">Cytoplasm</keyword>
<keyword id="KW-0436">Ligase</keyword>
<keyword id="KW-0547">Nucleotide-binding</keyword>
<keyword id="KW-0648">Protein biosynthesis</keyword>
<keyword id="KW-1185">Reference proteome</keyword>
<feature type="chain" id="PRO_0000242087" description="Arginine--tRNA ligase">
    <location>
        <begin position="1"/>
        <end position="562"/>
    </location>
</feature>
<feature type="short sequence motif" description="'HIGH' region">
    <location>
        <begin position="126"/>
        <end position="136"/>
    </location>
</feature>
<protein>
    <recommendedName>
        <fullName evidence="1">Arginine--tRNA ligase</fullName>
        <ecNumber evidence="1">6.1.1.19</ecNumber>
    </recommendedName>
    <alternativeName>
        <fullName evidence="1">Arginyl-tRNA synthetase</fullName>
        <shortName evidence="1">ArgRS</shortName>
    </alternativeName>
</protein>
<comment type="catalytic activity">
    <reaction evidence="1">
        <text>tRNA(Arg) + L-arginine + ATP = L-arginyl-tRNA(Arg) + AMP + diphosphate</text>
        <dbReference type="Rhea" id="RHEA:20301"/>
        <dbReference type="Rhea" id="RHEA-COMP:9658"/>
        <dbReference type="Rhea" id="RHEA-COMP:9673"/>
        <dbReference type="ChEBI" id="CHEBI:30616"/>
        <dbReference type="ChEBI" id="CHEBI:32682"/>
        <dbReference type="ChEBI" id="CHEBI:33019"/>
        <dbReference type="ChEBI" id="CHEBI:78442"/>
        <dbReference type="ChEBI" id="CHEBI:78513"/>
        <dbReference type="ChEBI" id="CHEBI:456215"/>
        <dbReference type="EC" id="6.1.1.19"/>
    </reaction>
</comment>
<comment type="subunit">
    <text evidence="1">Monomer.</text>
</comment>
<comment type="subcellular location">
    <subcellularLocation>
        <location evidence="1">Cytoplasm</location>
    </subcellularLocation>
</comment>
<comment type="similarity">
    <text evidence="1">Belongs to the class-I aminoacyl-tRNA synthetase family.</text>
</comment>
<accession>Q2S3W3</accession>
<dbReference type="EC" id="6.1.1.19" evidence="1"/>
<dbReference type="EMBL" id="CP000159">
    <property type="protein sequence ID" value="ABC46058.1"/>
    <property type="molecule type" value="Genomic_DNA"/>
</dbReference>
<dbReference type="RefSeq" id="WP_011403746.1">
    <property type="nucleotide sequence ID" value="NC_007677.1"/>
</dbReference>
<dbReference type="RefSeq" id="YP_445118.1">
    <property type="nucleotide sequence ID" value="NC_007677.1"/>
</dbReference>
<dbReference type="SMR" id="Q2S3W3"/>
<dbReference type="STRING" id="309807.SRU_0986"/>
<dbReference type="EnsemblBacteria" id="ABC46058">
    <property type="protein sequence ID" value="ABC46058"/>
    <property type="gene ID" value="SRU_0986"/>
</dbReference>
<dbReference type="GeneID" id="83727914"/>
<dbReference type="KEGG" id="sru:SRU_0986"/>
<dbReference type="PATRIC" id="fig|309807.25.peg.1023"/>
<dbReference type="eggNOG" id="COG0018">
    <property type="taxonomic scope" value="Bacteria"/>
</dbReference>
<dbReference type="HOGENOM" id="CLU_006406_0_1_10"/>
<dbReference type="OrthoDB" id="9805987at2"/>
<dbReference type="Proteomes" id="UP000008674">
    <property type="component" value="Chromosome"/>
</dbReference>
<dbReference type="GO" id="GO:0005737">
    <property type="term" value="C:cytoplasm"/>
    <property type="evidence" value="ECO:0007669"/>
    <property type="project" value="UniProtKB-SubCell"/>
</dbReference>
<dbReference type="GO" id="GO:0004814">
    <property type="term" value="F:arginine-tRNA ligase activity"/>
    <property type="evidence" value="ECO:0007669"/>
    <property type="project" value="UniProtKB-UniRule"/>
</dbReference>
<dbReference type="GO" id="GO:0005524">
    <property type="term" value="F:ATP binding"/>
    <property type="evidence" value="ECO:0007669"/>
    <property type="project" value="UniProtKB-UniRule"/>
</dbReference>
<dbReference type="GO" id="GO:0006420">
    <property type="term" value="P:arginyl-tRNA aminoacylation"/>
    <property type="evidence" value="ECO:0007669"/>
    <property type="project" value="UniProtKB-UniRule"/>
</dbReference>
<dbReference type="CDD" id="cd07956">
    <property type="entry name" value="Anticodon_Ia_Arg"/>
    <property type="match status" value="1"/>
</dbReference>
<dbReference type="CDD" id="cd00671">
    <property type="entry name" value="ArgRS_core"/>
    <property type="match status" value="1"/>
</dbReference>
<dbReference type="FunFam" id="1.10.730.10:FF:000008">
    <property type="entry name" value="Arginine--tRNA ligase"/>
    <property type="match status" value="1"/>
</dbReference>
<dbReference type="FunFam" id="3.40.50.620:FF:000062">
    <property type="entry name" value="Arginine--tRNA ligase"/>
    <property type="match status" value="1"/>
</dbReference>
<dbReference type="Gene3D" id="3.30.1360.70">
    <property type="entry name" value="Arginyl tRNA synthetase N-terminal domain"/>
    <property type="match status" value="1"/>
</dbReference>
<dbReference type="Gene3D" id="3.40.50.620">
    <property type="entry name" value="HUPs"/>
    <property type="match status" value="1"/>
</dbReference>
<dbReference type="Gene3D" id="1.10.730.10">
    <property type="entry name" value="Isoleucyl-tRNA Synthetase, Domain 1"/>
    <property type="match status" value="1"/>
</dbReference>
<dbReference type="HAMAP" id="MF_00123">
    <property type="entry name" value="Arg_tRNA_synth"/>
    <property type="match status" value="1"/>
</dbReference>
<dbReference type="InterPro" id="IPR001278">
    <property type="entry name" value="Arg-tRNA-ligase"/>
</dbReference>
<dbReference type="InterPro" id="IPR005148">
    <property type="entry name" value="Arg-tRNA-synth_N"/>
</dbReference>
<dbReference type="InterPro" id="IPR036695">
    <property type="entry name" value="Arg-tRNA-synth_N_sf"/>
</dbReference>
<dbReference type="InterPro" id="IPR035684">
    <property type="entry name" value="ArgRS_core"/>
</dbReference>
<dbReference type="InterPro" id="IPR008909">
    <property type="entry name" value="DALR_anticod-bd"/>
</dbReference>
<dbReference type="InterPro" id="IPR014729">
    <property type="entry name" value="Rossmann-like_a/b/a_fold"/>
</dbReference>
<dbReference type="InterPro" id="IPR009080">
    <property type="entry name" value="tRNAsynth_Ia_anticodon-bd"/>
</dbReference>
<dbReference type="NCBIfam" id="TIGR00456">
    <property type="entry name" value="argS"/>
    <property type="match status" value="1"/>
</dbReference>
<dbReference type="PANTHER" id="PTHR11956:SF5">
    <property type="entry name" value="ARGININE--TRNA LIGASE, CYTOPLASMIC"/>
    <property type="match status" value="1"/>
</dbReference>
<dbReference type="PANTHER" id="PTHR11956">
    <property type="entry name" value="ARGINYL-TRNA SYNTHETASE"/>
    <property type="match status" value="1"/>
</dbReference>
<dbReference type="Pfam" id="PF03485">
    <property type="entry name" value="Arg_tRNA_synt_N"/>
    <property type="match status" value="1"/>
</dbReference>
<dbReference type="Pfam" id="PF05746">
    <property type="entry name" value="DALR_1"/>
    <property type="match status" value="1"/>
</dbReference>
<dbReference type="Pfam" id="PF00750">
    <property type="entry name" value="tRNA-synt_1d"/>
    <property type="match status" value="1"/>
</dbReference>
<dbReference type="PRINTS" id="PR01038">
    <property type="entry name" value="TRNASYNTHARG"/>
</dbReference>
<dbReference type="SMART" id="SM01016">
    <property type="entry name" value="Arg_tRNA_synt_N"/>
    <property type="match status" value="1"/>
</dbReference>
<dbReference type="SMART" id="SM00836">
    <property type="entry name" value="DALR_1"/>
    <property type="match status" value="1"/>
</dbReference>
<dbReference type="SUPFAM" id="SSF47323">
    <property type="entry name" value="Anticodon-binding domain of a subclass of class I aminoacyl-tRNA synthetases"/>
    <property type="match status" value="1"/>
</dbReference>
<dbReference type="SUPFAM" id="SSF55190">
    <property type="entry name" value="Arginyl-tRNA synthetase (ArgRS), N-terminal 'additional' domain"/>
    <property type="match status" value="1"/>
</dbReference>
<dbReference type="SUPFAM" id="SSF52374">
    <property type="entry name" value="Nucleotidylyl transferase"/>
    <property type="match status" value="1"/>
</dbReference>
<organism>
    <name type="scientific">Salinibacter ruber (strain DSM 13855 / M31)</name>
    <dbReference type="NCBI Taxonomy" id="309807"/>
    <lineage>
        <taxon>Bacteria</taxon>
        <taxon>Pseudomonadati</taxon>
        <taxon>Rhodothermota</taxon>
        <taxon>Rhodothermia</taxon>
        <taxon>Rhodothermales</taxon>
        <taxon>Salinibacteraceae</taxon>
        <taxon>Salinibacter</taxon>
    </lineage>
</organism>
<name>SYR_SALRD</name>
<evidence type="ECO:0000255" key="1">
    <source>
        <dbReference type="HAMAP-Rule" id="MF_00123"/>
    </source>
</evidence>
<gene>
    <name evidence="1" type="primary">argS</name>
    <name type="ordered locus">SRU_0986</name>
</gene>
<reference key="1">
    <citation type="journal article" date="2005" name="Proc. Natl. Acad. Sci. U.S.A.">
        <title>The genome of Salinibacter ruber: convergence and gene exchange among hyperhalophilic bacteria and archaea.</title>
        <authorList>
            <person name="Mongodin E.F."/>
            <person name="Nelson K.E."/>
            <person name="Daugherty S."/>
            <person name="DeBoy R.T."/>
            <person name="Wister J."/>
            <person name="Khouri H."/>
            <person name="Weidman J."/>
            <person name="Walsh D.A."/>
            <person name="Papke R.T."/>
            <person name="Sanchez Perez G."/>
            <person name="Sharma A.K."/>
            <person name="Nesbo C.L."/>
            <person name="MacLeod D."/>
            <person name="Bapteste E."/>
            <person name="Doolittle W.F."/>
            <person name="Charlebois R.L."/>
            <person name="Legault B."/>
            <person name="Rodriguez-Valera F."/>
        </authorList>
    </citation>
    <scope>NUCLEOTIDE SEQUENCE [LARGE SCALE GENOMIC DNA]</scope>
    <source>
        <strain>DSM 13855 / CECT 5946 / M31</strain>
    </source>
</reference>